<gene>
    <name evidence="1" type="primary">clpX</name>
    <name type="ordered locus">swp_3260</name>
</gene>
<sequence>MSENKGDGGKLLYCSFCGKSQHEVRKLIAGPSVYVCDECVELCNDIIREEIKEISPKQDQDKLPTPHELRAHLDDYVIGQDKAKKVLSVAVYNHYKRLKNASPKDGVELGKSNILLIGPTGSGKTLLAETLARFLNVPFTMADATTLTEAGYVGEDVENIIQKLLQKCDYDVEKAQRGIVYIDEIDKISRKSDNPSITRDVSGEGVQQALLKLIEGTVAAVPPQGGRKHPQQEFLQVDTSKILFVCGGAFAGLEKVIEQRSHVGTGIGFGAEVKGEADKATISDTLLQVEPEDLVKFGLIPEFIGRLPVLATLAELDDAALIQILSEPKNAITKQFAALFEMEDVELEFREDALKAIALKAQTRKTGARGLRSIVEGILLDIMYDLPSTDDVVKVVVDESVVKGESTPILIYATNEAQTATAE</sequence>
<keyword id="KW-0067">ATP-binding</keyword>
<keyword id="KW-0143">Chaperone</keyword>
<keyword id="KW-0479">Metal-binding</keyword>
<keyword id="KW-0547">Nucleotide-binding</keyword>
<keyword id="KW-0862">Zinc</keyword>
<comment type="function">
    <text evidence="1">ATP-dependent specificity component of the Clp protease. It directs the protease to specific substrates. Can perform chaperone functions in the absence of ClpP.</text>
</comment>
<comment type="subunit">
    <text evidence="1">Component of the ClpX-ClpP complex. Forms a hexameric ring that, in the presence of ATP, binds to fourteen ClpP subunits assembled into a disk-like structure with a central cavity, resembling the structure of eukaryotic proteasomes.</text>
</comment>
<comment type="similarity">
    <text evidence="1">Belongs to the ClpX chaperone family.</text>
</comment>
<name>CLPX_SHEPW</name>
<feature type="chain" id="PRO_1000118377" description="ATP-dependent Clp protease ATP-binding subunit ClpX">
    <location>
        <begin position="1"/>
        <end position="423"/>
    </location>
</feature>
<feature type="domain" description="ClpX-type ZB" evidence="2">
    <location>
        <begin position="2"/>
        <end position="55"/>
    </location>
</feature>
<feature type="binding site" evidence="2">
    <location>
        <position position="14"/>
    </location>
    <ligand>
        <name>Zn(2+)</name>
        <dbReference type="ChEBI" id="CHEBI:29105"/>
    </ligand>
</feature>
<feature type="binding site" evidence="2">
    <location>
        <position position="17"/>
    </location>
    <ligand>
        <name>Zn(2+)</name>
        <dbReference type="ChEBI" id="CHEBI:29105"/>
    </ligand>
</feature>
<feature type="binding site" evidence="2">
    <location>
        <position position="36"/>
    </location>
    <ligand>
        <name>Zn(2+)</name>
        <dbReference type="ChEBI" id="CHEBI:29105"/>
    </ligand>
</feature>
<feature type="binding site" evidence="2">
    <location>
        <position position="39"/>
    </location>
    <ligand>
        <name>Zn(2+)</name>
        <dbReference type="ChEBI" id="CHEBI:29105"/>
    </ligand>
</feature>
<feature type="binding site" evidence="1">
    <location>
        <begin position="119"/>
        <end position="126"/>
    </location>
    <ligand>
        <name>ATP</name>
        <dbReference type="ChEBI" id="CHEBI:30616"/>
    </ligand>
</feature>
<organism>
    <name type="scientific">Shewanella piezotolerans (strain WP3 / JCM 13877)</name>
    <dbReference type="NCBI Taxonomy" id="225849"/>
    <lineage>
        <taxon>Bacteria</taxon>
        <taxon>Pseudomonadati</taxon>
        <taxon>Pseudomonadota</taxon>
        <taxon>Gammaproteobacteria</taxon>
        <taxon>Alteromonadales</taxon>
        <taxon>Shewanellaceae</taxon>
        <taxon>Shewanella</taxon>
    </lineage>
</organism>
<protein>
    <recommendedName>
        <fullName evidence="1">ATP-dependent Clp protease ATP-binding subunit ClpX</fullName>
    </recommendedName>
</protein>
<proteinExistence type="inferred from homology"/>
<evidence type="ECO:0000255" key="1">
    <source>
        <dbReference type="HAMAP-Rule" id="MF_00175"/>
    </source>
</evidence>
<evidence type="ECO:0000255" key="2">
    <source>
        <dbReference type="PROSITE-ProRule" id="PRU01250"/>
    </source>
</evidence>
<dbReference type="EMBL" id="CP000472">
    <property type="protein sequence ID" value="ACJ29964.1"/>
    <property type="molecule type" value="Genomic_DNA"/>
</dbReference>
<dbReference type="RefSeq" id="WP_020913314.1">
    <property type="nucleotide sequence ID" value="NC_011566.1"/>
</dbReference>
<dbReference type="SMR" id="B8CRF6"/>
<dbReference type="STRING" id="225849.swp_3260"/>
<dbReference type="KEGG" id="swp:swp_3260"/>
<dbReference type="eggNOG" id="COG1219">
    <property type="taxonomic scope" value="Bacteria"/>
</dbReference>
<dbReference type="HOGENOM" id="CLU_014218_8_2_6"/>
<dbReference type="OrthoDB" id="9804062at2"/>
<dbReference type="Proteomes" id="UP000000753">
    <property type="component" value="Chromosome"/>
</dbReference>
<dbReference type="GO" id="GO:0009376">
    <property type="term" value="C:HslUV protease complex"/>
    <property type="evidence" value="ECO:0007669"/>
    <property type="project" value="TreeGrafter"/>
</dbReference>
<dbReference type="GO" id="GO:0005524">
    <property type="term" value="F:ATP binding"/>
    <property type="evidence" value="ECO:0007669"/>
    <property type="project" value="UniProtKB-UniRule"/>
</dbReference>
<dbReference type="GO" id="GO:0016887">
    <property type="term" value="F:ATP hydrolysis activity"/>
    <property type="evidence" value="ECO:0007669"/>
    <property type="project" value="InterPro"/>
</dbReference>
<dbReference type="GO" id="GO:0140662">
    <property type="term" value="F:ATP-dependent protein folding chaperone"/>
    <property type="evidence" value="ECO:0007669"/>
    <property type="project" value="InterPro"/>
</dbReference>
<dbReference type="GO" id="GO:0046983">
    <property type="term" value="F:protein dimerization activity"/>
    <property type="evidence" value="ECO:0007669"/>
    <property type="project" value="InterPro"/>
</dbReference>
<dbReference type="GO" id="GO:0051082">
    <property type="term" value="F:unfolded protein binding"/>
    <property type="evidence" value="ECO:0007669"/>
    <property type="project" value="UniProtKB-UniRule"/>
</dbReference>
<dbReference type="GO" id="GO:0008270">
    <property type="term" value="F:zinc ion binding"/>
    <property type="evidence" value="ECO:0007669"/>
    <property type="project" value="InterPro"/>
</dbReference>
<dbReference type="GO" id="GO:0051301">
    <property type="term" value="P:cell division"/>
    <property type="evidence" value="ECO:0007669"/>
    <property type="project" value="TreeGrafter"/>
</dbReference>
<dbReference type="GO" id="GO:0051603">
    <property type="term" value="P:proteolysis involved in protein catabolic process"/>
    <property type="evidence" value="ECO:0007669"/>
    <property type="project" value="TreeGrafter"/>
</dbReference>
<dbReference type="CDD" id="cd19497">
    <property type="entry name" value="RecA-like_ClpX"/>
    <property type="match status" value="1"/>
</dbReference>
<dbReference type="FunFam" id="1.10.8.60:FF:000002">
    <property type="entry name" value="ATP-dependent Clp protease ATP-binding subunit ClpX"/>
    <property type="match status" value="1"/>
</dbReference>
<dbReference type="FunFam" id="3.40.50.300:FF:000005">
    <property type="entry name" value="ATP-dependent Clp protease ATP-binding subunit ClpX"/>
    <property type="match status" value="1"/>
</dbReference>
<dbReference type="Gene3D" id="1.10.8.60">
    <property type="match status" value="1"/>
</dbReference>
<dbReference type="Gene3D" id="6.20.220.10">
    <property type="entry name" value="ClpX chaperone, C4-type zinc finger domain"/>
    <property type="match status" value="1"/>
</dbReference>
<dbReference type="Gene3D" id="3.40.50.300">
    <property type="entry name" value="P-loop containing nucleotide triphosphate hydrolases"/>
    <property type="match status" value="1"/>
</dbReference>
<dbReference type="HAMAP" id="MF_00175">
    <property type="entry name" value="ClpX"/>
    <property type="match status" value="1"/>
</dbReference>
<dbReference type="InterPro" id="IPR003593">
    <property type="entry name" value="AAA+_ATPase"/>
</dbReference>
<dbReference type="InterPro" id="IPR050052">
    <property type="entry name" value="ATP-dep_Clp_protease_ClpX"/>
</dbReference>
<dbReference type="InterPro" id="IPR003959">
    <property type="entry name" value="ATPase_AAA_core"/>
</dbReference>
<dbReference type="InterPro" id="IPR019489">
    <property type="entry name" value="Clp_ATPase_C"/>
</dbReference>
<dbReference type="InterPro" id="IPR004487">
    <property type="entry name" value="Clp_protease_ATP-bd_su_ClpX"/>
</dbReference>
<dbReference type="InterPro" id="IPR046425">
    <property type="entry name" value="ClpX_bact"/>
</dbReference>
<dbReference type="InterPro" id="IPR027417">
    <property type="entry name" value="P-loop_NTPase"/>
</dbReference>
<dbReference type="InterPro" id="IPR010603">
    <property type="entry name" value="Znf_CppX_C4"/>
</dbReference>
<dbReference type="InterPro" id="IPR038366">
    <property type="entry name" value="Znf_CppX_C4_sf"/>
</dbReference>
<dbReference type="NCBIfam" id="TIGR00382">
    <property type="entry name" value="clpX"/>
    <property type="match status" value="1"/>
</dbReference>
<dbReference type="NCBIfam" id="NF003745">
    <property type="entry name" value="PRK05342.1"/>
    <property type="match status" value="1"/>
</dbReference>
<dbReference type="PANTHER" id="PTHR48102:SF7">
    <property type="entry name" value="ATP-DEPENDENT CLP PROTEASE ATP-BINDING SUBUNIT CLPX-LIKE, MITOCHONDRIAL"/>
    <property type="match status" value="1"/>
</dbReference>
<dbReference type="PANTHER" id="PTHR48102">
    <property type="entry name" value="ATP-DEPENDENT CLP PROTEASE ATP-BINDING SUBUNIT CLPX-LIKE, MITOCHONDRIAL-RELATED"/>
    <property type="match status" value="1"/>
</dbReference>
<dbReference type="Pfam" id="PF07724">
    <property type="entry name" value="AAA_2"/>
    <property type="match status" value="1"/>
</dbReference>
<dbReference type="Pfam" id="PF10431">
    <property type="entry name" value="ClpB_D2-small"/>
    <property type="match status" value="1"/>
</dbReference>
<dbReference type="Pfam" id="PF06689">
    <property type="entry name" value="zf-C4_ClpX"/>
    <property type="match status" value="1"/>
</dbReference>
<dbReference type="SMART" id="SM00382">
    <property type="entry name" value="AAA"/>
    <property type="match status" value="1"/>
</dbReference>
<dbReference type="SMART" id="SM01086">
    <property type="entry name" value="ClpB_D2-small"/>
    <property type="match status" value="1"/>
</dbReference>
<dbReference type="SMART" id="SM00994">
    <property type="entry name" value="zf-C4_ClpX"/>
    <property type="match status" value="1"/>
</dbReference>
<dbReference type="SUPFAM" id="SSF57716">
    <property type="entry name" value="Glucocorticoid receptor-like (DNA-binding domain)"/>
    <property type="match status" value="1"/>
</dbReference>
<dbReference type="SUPFAM" id="SSF52540">
    <property type="entry name" value="P-loop containing nucleoside triphosphate hydrolases"/>
    <property type="match status" value="1"/>
</dbReference>
<dbReference type="PROSITE" id="PS51902">
    <property type="entry name" value="CLPX_ZB"/>
    <property type="match status" value="1"/>
</dbReference>
<accession>B8CRF6</accession>
<reference key="1">
    <citation type="journal article" date="2008" name="PLoS ONE">
        <title>Environmental adaptation: genomic analysis of the piezotolerant and psychrotolerant deep-sea iron reducing bacterium Shewanella piezotolerans WP3.</title>
        <authorList>
            <person name="Wang F."/>
            <person name="Wang J."/>
            <person name="Jian H."/>
            <person name="Zhang B."/>
            <person name="Li S."/>
            <person name="Wang F."/>
            <person name="Zeng X."/>
            <person name="Gao L."/>
            <person name="Bartlett D.H."/>
            <person name="Yu J."/>
            <person name="Hu S."/>
            <person name="Xiao X."/>
        </authorList>
    </citation>
    <scope>NUCLEOTIDE SEQUENCE [LARGE SCALE GENOMIC DNA]</scope>
    <source>
        <strain>WP3 / JCM 13877</strain>
    </source>
</reference>